<evidence type="ECO:0000269" key="1">
    <source>
    </source>
</evidence>
<evidence type="ECO:0000269" key="2">
    <source>
    </source>
</evidence>
<evidence type="ECO:0000269" key="3">
    <source>
    </source>
</evidence>
<reference key="1">
    <citation type="journal article" date="1998" name="Mol. Microbiol.">
        <title>Biochemical and genetic characterization of benzylsuccinate synthase from Thauera aromatica: a new glycyl radical enzyme catalysing the first step in anaerobic toluene metabolism.</title>
        <authorList>
            <person name="Leuthner B."/>
            <person name="Leutwein C."/>
            <person name="Schulz H."/>
            <person name="Horth P."/>
            <person name="Haehnel W."/>
            <person name="Schiltz E."/>
            <person name="Schagger H."/>
            <person name="Heider J."/>
        </authorList>
    </citation>
    <scope>NUCLEOTIDE SEQUENCE [GENOMIC DNA]</scope>
    <scope>PARTIAL PROTEIN SEQUENCE</scope>
    <scope>FUNCTION</scope>
    <scope>CATALYTIC ACTIVITY</scope>
    <scope>ACTIVITY REGULATION</scope>
    <scope>BIOPHYSICOCHEMICAL PROPERTIES</scope>
    <scope>PATHWAY</scope>
    <scope>SUBUNIT</scope>
    <scope>INDUCTION</scope>
    <source>
        <strain>DSM 6984 / CIP 107765 / K172</strain>
    </source>
</reference>
<reference key="2">
    <citation type="journal article" date="1998" name="FEMS Microbiol. Lett.">
        <title>A two-component system involved in regulation of anaerobic toluene metabolism in Thauera aromatica.</title>
        <authorList>
            <person name="Leuthner B."/>
            <person name="Heider J."/>
        </authorList>
    </citation>
    <scope>INDUCTION</scope>
    <source>
        <strain>DSM 6984 / CIP 107765 / K172</strain>
    </source>
</reference>
<reference key="3">
    <citation type="journal article" date="2002" name="Arch. Microbiol.">
        <title>Operon structure and expression of the genes for benzylsuccinate synthase in Thauera aromatica strain K172.</title>
        <authorList>
            <person name="Hermuth K."/>
            <person name="Leuthner B."/>
            <person name="Heider J."/>
        </authorList>
    </citation>
    <scope>INDUCTION</scope>
    <source>
        <strain>DSM 6984 / CIP 107765 / K172</strain>
    </source>
</reference>
<comment type="function">
    <text evidence="2">Catalyzes the addition of fumarate to the methyl group of toluene, leading to the formation of benzylsuccinate.</text>
</comment>
<comment type="catalytic activity">
    <reaction evidence="2">
        <text>toluene + fumarate = 2-benzylsuccinate</text>
        <dbReference type="Rhea" id="RHEA:10416"/>
        <dbReference type="ChEBI" id="CHEBI:17578"/>
        <dbReference type="ChEBI" id="CHEBI:29806"/>
        <dbReference type="ChEBI" id="CHEBI:57621"/>
        <dbReference type="EC" id="4.1.99.11"/>
    </reaction>
</comment>
<comment type="activity regulation">
    <text evidence="2">Activated by the benzylsuccinate synthase activating enzyme BssD. Rapidly inactivated by oxygen.</text>
</comment>
<comment type="biophysicochemical properties">
    <phDependence>
        <text evidence="2">Optimum pH is 8.0.</text>
    </phDependence>
</comment>
<comment type="pathway">
    <text evidence="2">Xenobiotic degradation; toluene degradation.</text>
</comment>
<comment type="subunit">
    <text evidence="2">Heterohexamer composed of 2 alpha subunits, 2 beta subunits and 2 gamma subunits.</text>
</comment>
<comment type="induction">
    <text evidence="1 2 3">Induced by toluene, probably via the TdiR/TdiS two-component regulatory system.</text>
</comment>
<proteinExistence type="evidence at protein level"/>
<sequence>MSATPHTQVHWEENTARPCRKCKWQTPDPTDPLRGQCTVNRHAMGGVWKRWIRDVEHMTCSRHEEGELSFRDHV</sequence>
<accession>O87944</accession>
<feature type="initiator methionine" description="Removed">
    <location>
        <position position="1"/>
    </location>
</feature>
<feature type="chain" id="PRO_0000418873" description="Benzylsuccinate synthase beta subunit">
    <location>
        <begin position="2"/>
        <end position="74"/>
    </location>
</feature>
<gene>
    <name type="primary">bssB</name>
</gene>
<name>BSSB_THAAR</name>
<keyword id="KW-0058">Aromatic hydrocarbons catabolism</keyword>
<keyword id="KW-0903">Direct protein sequencing</keyword>
<keyword id="KW-0456">Lyase</keyword>
<protein>
    <recommendedName>
        <fullName>Benzylsuccinate synthase beta subunit</fullName>
        <ecNumber>4.1.99.11</ecNumber>
    </recommendedName>
</protein>
<dbReference type="EC" id="4.1.99.11"/>
<dbReference type="EMBL" id="AJ001848">
    <property type="protein sequence ID" value="CAA05053.1"/>
    <property type="molecule type" value="Genomic_DNA"/>
</dbReference>
<dbReference type="SMR" id="O87944"/>
<dbReference type="KEGG" id="ag:CAA05053"/>
<dbReference type="BioCyc" id="MetaCyc:MONOMER-671"/>
<dbReference type="BRENDA" id="4.1.99.11">
    <property type="organism ID" value="6271"/>
</dbReference>
<dbReference type="UniPathway" id="UPA00273"/>
<dbReference type="GO" id="GO:0018805">
    <property type="term" value="F:benzylsuccinate synthase activity"/>
    <property type="evidence" value="ECO:0007669"/>
    <property type="project" value="UniProtKB-EC"/>
</dbReference>
<dbReference type="GO" id="GO:0042203">
    <property type="term" value="P:toluene catabolic process"/>
    <property type="evidence" value="ECO:0007669"/>
    <property type="project" value="UniProtKB-UniPathway"/>
</dbReference>
<dbReference type="Gene3D" id="4.10.490.20">
    <property type="match status" value="1"/>
</dbReference>
<dbReference type="InterPro" id="IPR053760">
    <property type="entry name" value="BSS-like_sf"/>
</dbReference>
<dbReference type="InterPro" id="IPR040565">
    <property type="entry name" value="BssB_TutG"/>
</dbReference>
<dbReference type="Pfam" id="PF18512">
    <property type="entry name" value="BssB_TutG"/>
    <property type="match status" value="1"/>
</dbReference>
<organism>
    <name type="scientific">Thauera aromatica</name>
    <dbReference type="NCBI Taxonomy" id="59405"/>
    <lineage>
        <taxon>Bacteria</taxon>
        <taxon>Pseudomonadati</taxon>
        <taxon>Pseudomonadota</taxon>
        <taxon>Betaproteobacteria</taxon>
        <taxon>Rhodocyclales</taxon>
        <taxon>Zoogloeaceae</taxon>
        <taxon>Thauera</taxon>
    </lineage>
</organism>